<evidence type="ECO:0000269" key="1">
    <source ref="1"/>
</evidence>
<evidence type="ECO:0000269" key="2">
    <source ref="2"/>
</evidence>
<protein>
    <recommendedName>
        <fullName>o-phthalyl amidase</fullName>
        <ecNumber>3.5.1.79</ecNumber>
    </recommendedName>
</protein>
<accession>P0C2Y0</accession>
<reference key="1">
    <citation type="patent" date="1995-08-29" number="US5445959">
        <title>Enzyme from microbial source: phthalyl amidase.</title>
        <authorList>
            <person name="Briggs B.S."/>
            <person name="Zmijewski M.J. Jr."/>
        </authorList>
    </citation>
    <scope>NUCLEOTIDE SEQUENCE [GENOMIC DNA]</scope>
    <scope>FUNCTION</scope>
    <scope>BIOPHYSICOCHEMICAL PROPERTIES</scope>
</reference>
<reference key="2">
    <citation type="journal article" date="1996" name="J. Mol. Catal., B Enzym.">
        <title>Discovery, purification, and properties of o-phthalyl amidase from Xanthobacter agilis.</title>
        <authorList>
            <person name="Briggs B.S."/>
            <person name="Kreuzman A.J."/>
            <person name="Whitesitt C."/>
            <person name="Yeh W.-K."/>
            <person name="Zmijewski M.J. Jr."/>
        </authorList>
    </citation>
    <scope>PROTEIN SEQUENCE OF 143-168; 210-236; 267-281; 323-341 AND 435-447</scope>
    <scope>FUNCTION</scope>
    <scope>SUBSTRATE SPECIFICITY</scope>
    <scope>SUBUNIT</scope>
    <scope>BLOCKAGE OF N-TERMINUS</scope>
    <scope>ACTIVITY REGULATION</scope>
    <scope>BIOPHYSICOCHEMICAL PROPERTIES</scope>
</reference>
<name>PHAM_XANAG</name>
<dbReference type="EC" id="3.5.1.79"/>
<dbReference type="EMBL" id="I14148">
    <property type="status" value="NOT_ANNOTATED_CDS"/>
    <property type="molecule type" value="Genomic_DNA"/>
</dbReference>
<dbReference type="SMR" id="P0C2Y0"/>
<dbReference type="ESTHER" id="xanag-pham">
    <property type="family name" value="6_AlphaBeta_hydrolase"/>
</dbReference>
<dbReference type="GO" id="GO:0047418">
    <property type="term" value="F:phthalyl amidase activity"/>
    <property type="evidence" value="ECO:0007669"/>
    <property type="project" value="UniProtKB-EC"/>
</dbReference>
<dbReference type="Gene3D" id="3.40.50.1820">
    <property type="entry name" value="alpha/beta hydrolase"/>
    <property type="match status" value="1"/>
</dbReference>
<dbReference type="InterPro" id="IPR029058">
    <property type="entry name" value="AB_hydrolase_fold"/>
</dbReference>
<dbReference type="InterPro" id="IPR045556">
    <property type="entry name" value="DUF6351"/>
</dbReference>
<dbReference type="Pfam" id="PF19878">
    <property type="entry name" value="DUF6351"/>
    <property type="match status" value="1"/>
</dbReference>
<dbReference type="SUPFAM" id="SSF53474">
    <property type="entry name" value="alpha/beta-Hydrolases"/>
    <property type="match status" value="1"/>
</dbReference>
<sequence>MQAPSVHQHVAFTEEIGDLPDGSSYMIRVPENWNGVLIRDLDLVSGTSNSNAARYETMLKEGFAVAGTARHPLRQWQYDPAHEIENLNHVLDTFEENYGSPERVIQYGCSGGAHVSLAVAEDFSDRVDGSVALAAHTPVWIMNSFLDGWFSLQSLIGEYYVEAGHGPLSDLAITKLPNDGSSNSSGHGMEGDLPAAWRNAFTAANATPEGRARMALAFALGQWSPWLADNTPQPDLDDPEAIADSVYESAMRLAGSPGGEARIMFENAARGQQLSWNDDIDYADFWENSNPAMKSAVQELYDTAGLDLQSDIETVNSQPRIEASQYALDYWNTPGRNVIGDPEVPVLRLHMIGDYQIPYSLVQGYSDLISENNNDDLYRTAFVQSTGHCNFTAAESSAAIEVMMQRLDTGEWPSTEPDDLNAIAEASNTGTEARFMALDGWEIPEYNRTWKPE</sequence>
<comment type="function">
    <text evidence="1 2">Catalyzes the removal of the phthalyl group from phthalyl amides generating phthalate and an amine. The enzyme has a broad substrate specificity and hydrolyzes phthalylated amino acids, peptides, beta-lactams, aromatic and aliphatic amines; substitutions allowed on the phthalyl group include 6-F, 6-NH(2), 3-OH, and a nitrogen in the aromatic ring ortho to the carboxy group attached to the amine.</text>
</comment>
<comment type="catalytic activity">
    <reaction>
        <text>a phtalamide + H2O = phthalate + a primary amine</text>
        <dbReference type="Rhea" id="RHEA:18297"/>
        <dbReference type="ChEBI" id="CHEBI:15377"/>
        <dbReference type="ChEBI" id="CHEBI:17563"/>
        <dbReference type="ChEBI" id="CHEBI:65295"/>
        <dbReference type="ChEBI" id="CHEBI:65296"/>
        <dbReference type="EC" id="3.5.1.79"/>
    </reaction>
</comment>
<comment type="activity regulation">
    <text evidence="2">Inhibited by iodoacetate, p-hydroxymercuric benzoate and copper ions.</text>
</comment>
<comment type="biophysicochemical properties">
    <kinetics>
        <KM evidence="1 2">0.9 mM for o-phthalyl carbacephem</KM>
        <KM evidence="1 2">0.05 mM for 4-(2'-carboxy-N-benzoyl)amino-2-carboxy-nitrobenzene</KM>
        <Vmax evidence="1 2">7.6 umol/min/mg enzyme with o-phthalyl carbacephem as substrate</Vmax>
        <Vmax evidence="1 2">5.95 umol/min/mg enzyme with 4-(2'-carboxy-N-benzoyl)amino-2-carboxy-nitrobenzene as substrate</Vmax>
    </kinetics>
    <phDependence>
        <text evidence="1 2">Optimum pH is 7.8-8.4.</text>
    </phDependence>
    <temperatureDependence>
        <text evidence="1 2">Optimum temperature is 28-34 degrees Celsius.</text>
    </temperatureDependence>
</comment>
<comment type="subunit">
    <text evidence="2">Monomer.</text>
</comment>
<comment type="PTM">
    <text>The N-terminus is blocked.</text>
</comment>
<comment type="biotechnology">
    <text>The broad substrate acceptance, high catalytic activity, and stability at high salt or substrate concentration of the enzyme indicates that it can serve as a gentle method for deprotecting phthalimido and o-phthalyl protected amides in new chemo-enzymatic synthetic routes.</text>
</comment>
<feature type="chain" id="PRO_0000287884" description="o-phthalyl amidase">
    <location>
        <begin position="1"/>
        <end position="453"/>
    </location>
</feature>
<keyword id="KW-0903">Direct protein sequencing</keyword>
<keyword id="KW-0378">Hydrolase</keyword>
<organism>
    <name type="scientific">Xanthobacter agilis</name>
    <dbReference type="NCBI Taxonomy" id="47492"/>
    <lineage>
        <taxon>Bacteria</taxon>
        <taxon>Pseudomonadati</taxon>
        <taxon>Pseudomonadota</taxon>
        <taxon>Alphaproteobacteria</taxon>
        <taxon>Hyphomicrobiales</taxon>
        <taxon>Xanthobacteraceae</taxon>
        <taxon>Xanthobacter</taxon>
    </lineage>
</organism>
<proteinExistence type="evidence at protein level"/>